<name>YTZB_BACSU</name>
<reference key="1">
    <citation type="journal article" date="1997" name="Nature">
        <title>The complete genome sequence of the Gram-positive bacterium Bacillus subtilis.</title>
        <authorList>
            <person name="Kunst F."/>
            <person name="Ogasawara N."/>
            <person name="Moszer I."/>
            <person name="Albertini A.M."/>
            <person name="Alloni G."/>
            <person name="Azevedo V."/>
            <person name="Bertero M.G."/>
            <person name="Bessieres P."/>
            <person name="Bolotin A."/>
            <person name="Borchert S."/>
            <person name="Borriss R."/>
            <person name="Boursier L."/>
            <person name="Brans A."/>
            <person name="Braun M."/>
            <person name="Brignell S.C."/>
            <person name="Bron S."/>
            <person name="Brouillet S."/>
            <person name="Bruschi C.V."/>
            <person name="Caldwell B."/>
            <person name="Capuano V."/>
            <person name="Carter N.M."/>
            <person name="Choi S.-K."/>
            <person name="Codani J.-J."/>
            <person name="Connerton I.F."/>
            <person name="Cummings N.J."/>
            <person name="Daniel R.A."/>
            <person name="Denizot F."/>
            <person name="Devine K.M."/>
            <person name="Duesterhoeft A."/>
            <person name="Ehrlich S.D."/>
            <person name="Emmerson P.T."/>
            <person name="Entian K.-D."/>
            <person name="Errington J."/>
            <person name="Fabret C."/>
            <person name="Ferrari E."/>
            <person name="Foulger D."/>
            <person name="Fritz C."/>
            <person name="Fujita M."/>
            <person name="Fujita Y."/>
            <person name="Fuma S."/>
            <person name="Galizzi A."/>
            <person name="Galleron N."/>
            <person name="Ghim S.-Y."/>
            <person name="Glaser P."/>
            <person name="Goffeau A."/>
            <person name="Golightly E.J."/>
            <person name="Grandi G."/>
            <person name="Guiseppi G."/>
            <person name="Guy B.J."/>
            <person name="Haga K."/>
            <person name="Haiech J."/>
            <person name="Harwood C.R."/>
            <person name="Henaut A."/>
            <person name="Hilbert H."/>
            <person name="Holsappel S."/>
            <person name="Hosono S."/>
            <person name="Hullo M.-F."/>
            <person name="Itaya M."/>
            <person name="Jones L.-M."/>
            <person name="Joris B."/>
            <person name="Karamata D."/>
            <person name="Kasahara Y."/>
            <person name="Klaerr-Blanchard M."/>
            <person name="Klein C."/>
            <person name="Kobayashi Y."/>
            <person name="Koetter P."/>
            <person name="Koningstein G."/>
            <person name="Krogh S."/>
            <person name="Kumano M."/>
            <person name="Kurita K."/>
            <person name="Lapidus A."/>
            <person name="Lardinois S."/>
            <person name="Lauber J."/>
            <person name="Lazarevic V."/>
            <person name="Lee S.-M."/>
            <person name="Levine A."/>
            <person name="Liu H."/>
            <person name="Masuda S."/>
            <person name="Mauel C."/>
            <person name="Medigue C."/>
            <person name="Medina N."/>
            <person name="Mellado R.P."/>
            <person name="Mizuno M."/>
            <person name="Moestl D."/>
            <person name="Nakai S."/>
            <person name="Noback M."/>
            <person name="Noone D."/>
            <person name="O'Reilly M."/>
            <person name="Ogawa K."/>
            <person name="Ogiwara A."/>
            <person name="Oudega B."/>
            <person name="Park S.-H."/>
            <person name="Parro V."/>
            <person name="Pohl T.M."/>
            <person name="Portetelle D."/>
            <person name="Porwollik S."/>
            <person name="Prescott A.M."/>
            <person name="Presecan E."/>
            <person name="Pujic P."/>
            <person name="Purnelle B."/>
            <person name="Rapoport G."/>
            <person name="Rey M."/>
            <person name="Reynolds S."/>
            <person name="Rieger M."/>
            <person name="Rivolta C."/>
            <person name="Rocha E."/>
            <person name="Roche B."/>
            <person name="Rose M."/>
            <person name="Sadaie Y."/>
            <person name="Sato T."/>
            <person name="Scanlan E."/>
            <person name="Schleich S."/>
            <person name="Schroeter R."/>
            <person name="Scoffone F."/>
            <person name="Sekiguchi J."/>
            <person name="Sekowska A."/>
            <person name="Seror S.J."/>
            <person name="Serror P."/>
            <person name="Shin B.-S."/>
            <person name="Soldo B."/>
            <person name="Sorokin A."/>
            <person name="Tacconi E."/>
            <person name="Takagi T."/>
            <person name="Takahashi H."/>
            <person name="Takemaru K."/>
            <person name="Takeuchi M."/>
            <person name="Tamakoshi A."/>
            <person name="Tanaka T."/>
            <person name="Terpstra P."/>
            <person name="Tognoni A."/>
            <person name="Tosato V."/>
            <person name="Uchiyama S."/>
            <person name="Vandenbol M."/>
            <person name="Vannier F."/>
            <person name="Vassarotti A."/>
            <person name="Viari A."/>
            <person name="Wambutt R."/>
            <person name="Wedler E."/>
            <person name="Wedler H."/>
            <person name="Weitzenegger T."/>
            <person name="Winters P."/>
            <person name="Wipat A."/>
            <person name="Yamamoto H."/>
            <person name="Yamane K."/>
            <person name="Yasumoto K."/>
            <person name="Yata K."/>
            <person name="Yoshida K."/>
            <person name="Yoshikawa H.-F."/>
            <person name="Zumstein E."/>
            <person name="Yoshikawa H."/>
            <person name="Danchin A."/>
        </authorList>
    </citation>
    <scope>NUCLEOTIDE SEQUENCE [LARGE SCALE GENOMIC DNA]</scope>
    <source>
        <strain>168</strain>
    </source>
</reference>
<gene>
    <name type="primary">ytzB</name>
    <name type="ordered locus">BSU29870</name>
</gene>
<accession>O32065</accession>
<sequence length="105" mass="11667">MKLRHLLLGAGLGICTAVVVRQYVMKPYISSEKALRIVKSAFKQRGPIDGSWIYTQPEPYNINGETVQVYKTGITRSAFGELEQYEVMVDAKTGEIVDVIDTIAS</sequence>
<keyword id="KW-1185">Reference proteome</keyword>
<feature type="chain" id="PRO_0000389479" description="Uncharacterized protein YtzB">
    <location>
        <begin position="1"/>
        <end position="105"/>
    </location>
</feature>
<proteinExistence type="predicted"/>
<organism>
    <name type="scientific">Bacillus subtilis (strain 168)</name>
    <dbReference type="NCBI Taxonomy" id="224308"/>
    <lineage>
        <taxon>Bacteria</taxon>
        <taxon>Bacillati</taxon>
        <taxon>Bacillota</taxon>
        <taxon>Bacilli</taxon>
        <taxon>Bacillales</taxon>
        <taxon>Bacillaceae</taxon>
        <taxon>Bacillus</taxon>
    </lineage>
</organism>
<protein>
    <recommendedName>
        <fullName>Uncharacterized protein YtzB</fullName>
    </recommendedName>
</protein>
<dbReference type="EMBL" id="AL009126">
    <property type="protein sequence ID" value="CAB14965.1"/>
    <property type="molecule type" value="Genomic_DNA"/>
</dbReference>
<dbReference type="PIR" id="D70004">
    <property type="entry name" value="D70004"/>
</dbReference>
<dbReference type="RefSeq" id="NP_390865.1">
    <property type="nucleotide sequence ID" value="NC_000964.3"/>
</dbReference>
<dbReference type="RefSeq" id="WP_003229259.1">
    <property type="nucleotide sequence ID" value="NZ_OZ025638.1"/>
</dbReference>
<dbReference type="FunCoup" id="O32065">
    <property type="interactions" value="12"/>
</dbReference>
<dbReference type="STRING" id="224308.BSU29870"/>
<dbReference type="PaxDb" id="224308-BSU29870"/>
<dbReference type="EnsemblBacteria" id="CAB14965">
    <property type="protein sequence ID" value="CAB14965"/>
    <property type="gene ID" value="BSU_29870"/>
</dbReference>
<dbReference type="GeneID" id="937300"/>
<dbReference type="KEGG" id="bsu:BSU29870"/>
<dbReference type="PATRIC" id="fig|224308.179.peg.3245"/>
<dbReference type="eggNOG" id="COG5584">
    <property type="taxonomic scope" value="Bacteria"/>
</dbReference>
<dbReference type="InParanoid" id="O32065"/>
<dbReference type="OrthoDB" id="2989832at2"/>
<dbReference type="PhylomeDB" id="O32065"/>
<dbReference type="BioCyc" id="BSUB:BSU29870-MONOMER"/>
<dbReference type="Proteomes" id="UP000001570">
    <property type="component" value="Chromosome"/>
</dbReference>
<dbReference type="InterPro" id="IPR025711">
    <property type="entry name" value="PepSY"/>
</dbReference>
<dbReference type="Pfam" id="PF03413">
    <property type="entry name" value="PepSY"/>
    <property type="match status" value="1"/>
</dbReference>